<protein>
    <recommendedName>
        <fullName evidence="1">Large ribosomal subunit protein bL36</fullName>
    </recommendedName>
    <alternativeName>
        <fullName>50S ribosomal protein L36</fullName>
    </alternativeName>
    <alternativeName>
        <fullName>Ribosomal protein B</fullName>
    </alternativeName>
</protein>
<organism>
    <name type="scientific">Shigella flexneri</name>
    <dbReference type="NCBI Taxonomy" id="623"/>
    <lineage>
        <taxon>Bacteria</taxon>
        <taxon>Pseudomonadati</taxon>
        <taxon>Pseudomonadota</taxon>
        <taxon>Gammaproteobacteria</taxon>
        <taxon>Enterobacterales</taxon>
        <taxon>Enterobacteriaceae</taxon>
        <taxon>Shigella</taxon>
    </lineage>
</organism>
<gene>
    <name type="primary">rpmJ</name>
    <name type="ordered locus">SF3331</name>
    <name type="ordered locus">S4431</name>
</gene>
<name>RL36_SHIFL</name>
<accession>P0A7R0</accession>
<accession>P21194</accession>
<feature type="chain" id="PRO_0000126256" description="Large ribosomal subunit protein bL36">
    <location>
        <begin position="1"/>
        <end position="38"/>
    </location>
</feature>
<dbReference type="EMBL" id="AE005674">
    <property type="protein sequence ID" value="AAN44794.1"/>
    <property type="molecule type" value="Genomic_DNA"/>
</dbReference>
<dbReference type="EMBL" id="AE014073">
    <property type="protein sequence ID" value="AAP19382.1"/>
    <property type="molecule type" value="Genomic_DNA"/>
</dbReference>
<dbReference type="RefSeq" id="NP_709087.1">
    <property type="nucleotide sequence ID" value="NC_004337.2"/>
</dbReference>
<dbReference type="RefSeq" id="WP_000868187.1">
    <property type="nucleotide sequence ID" value="NZ_WPGW01000088.1"/>
</dbReference>
<dbReference type="SMR" id="P0A7R0"/>
<dbReference type="STRING" id="198214.SF3331"/>
<dbReference type="PaxDb" id="198214-SF3331"/>
<dbReference type="GeneID" id="1027024"/>
<dbReference type="GeneID" id="98390421"/>
<dbReference type="KEGG" id="sfl:SF3331"/>
<dbReference type="KEGG" id="sfx:S4431"/>
<dbReference type="PATRIC" id="fig|198214.7.peg.3940"/>
<dbReference type="HOGENOM" id="CLU_135723_6_2_6"/>
<dbReference type="Proteomes" id="UP000001006">
    <property type="component" value="Chromosome"/>
</dbReference>
<dbReference type="Proteomes" id="UP000002673">
    <property type="component" value="Chromosome"/>
</dbReference>
<dbReference type="GO" id="GO:0005737">
    <property type="term" value="C:cytoplasm"/>
    <property type="evidence" value="ECO:0007669"/>
    <property type="project" value="UniProtKB-ARBA"/>
</dbReference>
<dbReference type="GO" id="GO:1990904">
    <property type="term" value="C:ribonucleoprotein complex"/>
    <property type="evidence" value="ECO:0007669"/>
    <property type="project" value="UniProtKB-KW"/>
</dbReference>
<dbReference type="GO" id="GO:0005840">
    <property type="term" value="C:ribosome"/>
    <property type="evidence" value="ECO:0007669"/>
    <property type="project" value="UniProtKB-KW"/>
</dbReference>
<dbReference type="GO" id="GO:0003735">
    <property type="term" value="F:structural constituent of ribosome"/>
    <property type="evidence" value="ECO:0007669"/>
    <property type="project" value="InterPro"/>
</dbReference>
<dbReference type="GO" id="GO:0006412">
    <property type="term" value="P:translation"/>
    <property type="evidence" value="ECO:0007669"/>
    <property type="project" value="UniProtKB-UniRule"/>
</dbReference>
<dbReference type="HAMAP" id="MF_00251">
    <property type="entry name" value="Ribosomal_bL36"/>
    <property type="match status" value="1"/>
</dbReference>
<dbReference type="InterPro" id="IPR000473">
    <property type="entry name" value="Ribosomal_bL36"/>
</dbReference>
<dbReference type="InterPro" id="IPR035977">
    <property type="entry name" value="Ribosomal_bL36_sp"/>
</dbReference>
<dbReference type="NCBIfam" id="TIGR01022">
    <property type="entry name" value="rpmJ_bact"/>
    <property type="match status" value="1"/>
</dbReference>
<dbReference type="PANTHER" id="PTHR42888">
    <property type="entry name" value="50S RIBOSOMAL PROTEIN L36, CHLOROPLASTIC"/>
    <property type="match status" value="1"/>
</dbReference>
<dbReference type="PANTHER" id="PTHR42888:SF1">
    <property type="entry name" value="LARGE RIBOSOMAL SUBUNIT PROTEIN BL36C"/>
    <property type="match status" value="1"/>
</dbReference>
<dbReference type="Pfam" id="PF00444">
    <property type="entry name" value="Ribosomal_L36"/>
    <property type="match status" value="1"/>
</dbReference>
<dbReference type="SUPFAM" id="SSF57840">
    <property type="entry name" value="Ribosomal protein L36"/>
    <property type="match status" value="1"/>
</dbReference>
<dbReference type="PROSITE" id="PS00828">
    <property type="entry name" value="RIBOSOMAL_L36"/>
    <property type="match status" value="1"/>
</dbReference>
<keyword id="KW-1185">Reference proteome</keyword>
<keyword id="KW-0687">Ribonucleoprotein</keyword>
<keyword id="KW-0689">Ribosomal protein</keyword>
<comment type="similarity">
    <text evidence="1">Belongs to the bacterial ribosomal protein bL36 family.</text>
</comment>
<proteinExistence type="inferred from homology"/>
<reference key="1">
    <citation type="journal article" date="2002" name="Nucleic Acids Res.">
        <title>Genome sequence of Shigella flexneri 2a: insights into pathogenicity through comparison with genomes of Escherichia coli K12 and O157.</title>
        <authorList>
            <person name="Jin Q."/>
            <person name="Yuan Z."/>
            <person name="Xu J."/>
            <person name="Wang Y."/>
            <person name="Shen Y."/>
            <person name="Lu W."/>
            <person name="Wang J."/>
            <person name="Liu H."/>
            <person name="Yang J."/>
            <person name="Yang F."/>
            <person name="Zhang X."/>
            <person name="Zhang J."/>
            <person name="Yang G."/>
            <person name="Wu H."/>
            <person name="Qu D."/>
            <person name="Dong J."/>
            <person name="Sun L."/>
            <person name="Xue Y."/>
            <person name="Zhao A."/>
            <person name="Gao Y."/>
            <person name="Zhu J."/>
            <person name="Kan B."/>
            <person name="Ding K."/>
            <person name="Chen S."/>
            <person name="Cheng H."/>
            <person name="Yao Z."/>
            <person name="He B."/>
            <person name="Chen R."/>
            <person name="Ma D."/>
            <person name="Qiang B."/>
            <person name="Wen Y."/>
            <person name="Hou Y."/>
            <person name="Yu J."/>
        </authorList>
    </citation>
    <scope>NUCLEOTIDE SEQUENCE [LARGE SCALE GENOMIC DNA]</scope>
    <source>
        <strain>301 / Serotype 2a</strain>
    </source>
</reference>
<reference key="2">
    <citation type="journal article" date="2003" name="Infect. Immun.">
        <title>Complete genome sequence and comparative genomics of Shigella flexneri serotype 2a strain 2457T.</title>
        <authorList>
            <person name="Wei J."/>
            <person name="Goldberg M.B."/>
            <person name="Burland V."/>
            <person name="Venkatesan M.M."/>
            <person name="Deng W."/>
            <person name="Fournier G."/>
            <person name="Mayhew G.F."/>
            <person name="Plunkett G. III"/>
            <person name="Rose D.J."/>
            <person name="Darling A."/>
            <person name="Mau B."/>
            <person name="Perna N.T."/>
            <person name="Payne S.M."/>
            <person name="Runyen-Janecky L.J."/>
            <person name="Zhou S."/>
            <person name="Schwartz D.C."/>
            <person name="Blattner F.R."/>
        </authorList>
    </citation>
    <scope>NUCLEOTIDE SEQUENCE [LARGE SCALE GENOMIC DNA]</scope>
    <source>
        <strain>ATCC 700930 / 2457T / Serotype 2a</strain>
    </source>
</reference>
<evidence type="ECO:0000305" key="1"/>
<sequence>MKVRASVKKLCRNCKIVKRDGVIRVICSAEPKHKQRQG</sequence>